<reference key="1">
    <citation type="submission" date="2008-10" db="EMBL/GenBank/DDBJ databases">
        <title>Genome sequence of Bacillus cereus AH820.</title>
        <authorList>
            <person name="Dodson R.J."/>
            <person name="Durkin A.S."/>
            <person name="Rosovitz M.J."/>
            <person name="Rasko D.A."/>
            <person name="Hoffmaster A."/>
            <person name="Ravel J."/>
            <person name="Sutton G."/>
        </authorList>
    </citation>
    <scope>NUCLEOTIDE SEQUENCE [LARGE SCALE GENOMIC DNA]</scope>
    <source>
        <strain>AH820</strain>
    </source>
</reference>
<accession>B7JQU1</accession>
<keyword id="KW-0963">Cytoplasm</keyword>
<keyword id="KW-0378">Hydrolase</keyword>
<keyword id="KW-0479">Metal-binding</keyword>
<keyword id="KW-0862">Zinc</keyword>
<feature type="chain" id="PRO_1000139974" description="Putative metal-dependent hydrolase BCAH820_2714">
    <location>
        <begin position="1"/>
        <end position="173"/>
    </location>
</feature>
<feature type="binding site" evidence="1">
    <location>
        <position position="65"/>
    </location>
    <ligand>
        <name>Zn(2+)</name>
        <dbReference type="ChEBI" id="CHEBI:29105"/>
    </ligand>
</feature>
<feature type="binding site" evidence="1">
    <location>
        <position position="156"/>
    </location>
    <ligand>
        <name>Zn(2+)</name>
        <dbReference type="ChEBI" id="CHEBI:29105"/>
    </ligand>
</feature>
<feature type="binding site" evidence="1">
    <location>
        <position position="160"/>
    </location>
    <ligand>
        <name>Zn(2+)</name>
        <dbReference type="ChEBI" id="CHEBI:29105"/>
    </ligand>
</feature>
<evidence type="ECO:0000255" key="1">
    <source>
        <dbReference type="HAMAP-Rule" id="MF_01256"/>
    </source>
</evidence>
<name>Y2714_BACC0</name>
<gene>
    <name type="ordered locus">BCAH820_2714</name>
</gene>
<proteinExistence type="inferred from homology"/>
<comment type="function">
    <text evidence="1">Possible metal-dependent hydrolase.</text>
</comment>
<comment type="cofactor">
    <cofactor evidence="1">
        <name>Zn(2+)</name>
        <dbReference type="ChEBI" id="CHEBI:29105"/>
    </cofactor>
    <text evidence="1">Binds 1 zinc ion per subunit.</text>
</comment>
<comment type="subunit">
    <text evidence="1">Homodimer.</text>
</comment>
<comment type="subcellular location">
    <subcellularLocation>
        <location evidence="1">Cytoplasm</location>
    </subcellularLocation>
</comment>
<comment type="similarity">
    <text evidence="1">Belongs to the metal hydrolase YfiT family.</text>
</comment>
<dbReference type="EC" id="3.-.-.-" evidence="1"/>
<dbReference type="EMBL" id="CP001283">
    <property type="protein sequence ID" value="ACK90072.1"/>
    <property type="molecule type" value="Genomic_DNA"/>
</dbReference>
<dbReference type="RefSeq" id="WP_000999075.1">
    <property type="nucleotide sequence ID" value="NC_011773.1"/>
</dbReference>
<dbReference type="SMR" id="B7JQU1"/>
<dbReference type="KEGG" id="bcu:BCAH820_2714"/>
<dbReference type="HOGENOM" id="CLU_105789_1_0_9"/>
<dbReference type="Proteomes" id="UP000001363">
    <property type="component" value="Chromosome"/>
</dbReference>
<dbReference type="GO" id="GO:0005737">
    <property type="term" value="C:cytoplasm"/>
    <property type="evidence" value="ECO:0007669"/>
    <property type="project" value="UniProtKB-SubCell"/>
</dbReference>
<dbReference type="GO" id="GO:0016787">
    <property type="term" value="F:hydrolase activity"/>
    <property type="evidence" value="ECO:0007669"/>
    <property type="project" value="UniProtKB-UniRule"/>
</dbReference>
<dbReference type="GO" id="GO:0008270">
    <property type="term" value="F:zinc ion binding"/>
    <property type="evidence" value="ECO:0007669"/>
    <property type="project" value="UniProtKB-UniRule"/>
</dbReference>
<dbReference type="Gene3D" id="1.20.120.450">
    <property type="entry name" value="dinb family like domain"/>
    <property type="match status" value="1"/>
</dbReference>
<dbReference type="HAMAP" id="MF_01256">
    <property type="entry name" value="YfiT_hydrol"/>
    <property type="match status" value="1"/>
</dbReference>
<dbReference type="InterPro" id="IPR024775">
    <property type="entry name" value="DinB-like"/>
</dbReference>
<dbReference type="InterPro" id="IPR034660">
    <property type="entry name" value="DinB/YfiT-like"/>
</dbReference>
<dbReference type="InterPro" id="IPR023774">
    <property type="entry name" value="Put_metal_dep_hydrolase_YfiT"/>
</dbReference>
<dbReference type="NCBIfam" id="NF009807">
    <property type="entry name" value="PRK13291.1"/>
    <property type="match status" value="1"/>
</dbReference>
<dbReference type="Pfam" id="PF12867">
    <property type="entry name" value="DinB_2"/>
    <property type="match status" value="1"/>
</dbReference>
<dbReference type="SUPFAM" id="SSF109854">
    <property type="entry name" value="DinB/YfiT-like putative metalloenzymes"/>
    <property type="match status" value="1"/>
</dbReference>
<organism>
    <name type="scientific">Bacillus cereus (strain AH820)</name>
    <dbReference type="NCBI Taxonomy" id="405535"/>
    <lineage>
        <taxon>Bacteria</taxon>
        <taxon>Bacillati</taxon>
        <taxon>Bacillota</taxon>
        <taxon>Bacilli</taxon>
        <taxon>Bacillales</taxon>
        <taxon>Bacillaceae</taxon>
        <taxon>Bacillus</taxon>
        <taxon>Bacillus cereus group</taxon>
    </lineage>
</organism>
<protein>
    <recommendedName>
        <fullName evidence="1">Putative metal-dependent hydrolase BCAH820_2714</fullName>
        <ecNumber evidence="1">3.-.-.-</ecNumber>
    </recommendedName>
</protein>
<sequence length="173" mass="20399">MNDLRYPIGQFTYKRPITEEMIDTWIQEIEDLPNELTKAIKDLDQKQLDTPYRVGGWTVRQVVHHVVDSHMNSYIRFKLALTEKNPTIKPYKEEKWAELPDSKLPVDVSLVMLESLHKRWVNLLYSLELEDLEKTFNHPDTGETKLAAAIGLYAWHGRHHTAHITSLRKRLNW</sequence>